<protein>
    <recommendedName>
        <fullName>Uncharacterized protein MT1330</fullName>
    </recommendedName>
</protein>
<name>Y1291_MYCTO</name>
<evidence type="ECO:0000305" key="1"/>
<dbReference type="EMBL" id="AE000516">
    <property type="protein sequence ID" value="AAK45591.1"/>
    <property type="status" value="ALT_FRAME"/>
    <property type="molecule type" value="Genomic_DNA"/>
</dbReference>
<dbReference type="PIR" id="G70772">
    <property type="entry name" value="G70772"/>
</dbReference>
<dbReference type="RefSeq" id="WP_003406629.1">
    <property type="nucleotide sequence ID" value="NZ_KK341227.1"/>
</dbReference>
<dbReference type="KEGG" id="mtc:MT1330"/>
<dbReference type="PATRIC" id="fig|83331.31.peg.1436"/>
<dbReference type="HOGENOM" id="CLU_3397499_0_0_11"/>
<dbReference type="Proteomes" id="UP000001020">
    <property type="component" value="Chromosome"/>
</dbReference>
<dbReference type="InterPro" id="IPR007969">
    <property type="entry name" value="DUF732"/>
</dbReference>
<dbReference type="Pfam" id="PF05305">
    <property type="entry name" value="DUF732"/>
    <property type="match status" value="1"/>
</dbReference>
<sequence length="111" mass="11025">MFTRRFAASMVGTTLTAATLGLAALGFAGTASASSTDEAFLAQLQADGITPPSAARAIKDAHAVCDALDEGHSAKAVIKAVAKATGLSAKGAKTFAVDAASAYCPQYVTSS</sequence>
<comment type="similarity">
    <text evidence="1">To M.tuberculosis Rv1271c.</text>
</comment>
<comment type="sequence caution" evidence="1">
    <conflict type="frameshift">
        <sequence resource="EMBL-CDS" id="AAK45591"/>
    </conflict>
</comment>
<accession>P9WM32</accession>
<accession>L0T975</accession>
<accession>P0A5E5</accession>
<accession>Q10617</accession>
<feature type="chain" id="PRO_0000427374" description="Uncharacterized protein MT1330">
    <location>
        <begin position="1"/>
        <end position="111"/>
    </location>
</feature>
<keyword id="KW-1185">Reference proteome</keyword>
<organism>
    <name type="scientific">Mycobacterium tuberculosis (strain CDC 1551 / Oshkosh)</name>
    <dbReference type="NCBI Taxonomy" id="83331"/>
    <lineage>
        <taxon>Bacteria</taxon>
        <taxon>Bacillati</taxon>
        <taxon>Actinomycetota</taxon>
        <taxon>Actinomycetes</taxon>
        <taxon>Mycobacteriales</taxon>
        <taxon>Mycobacteriaceae</taxon>
        <taxon>Mycobacterium</taxon>
        <taxon>Mycobacterium tuberculosis complex</taxon>
    </lineage>
</organism>
<reference key="1">
    <citation type="journal article" date="2002" name="J. Bacteriol.">
        <title>Whole-genome comparison of Mycobacterium tuberculosis clinical and laboratory strains.</title>
        <authorList>
            <person name="Fleischmann R.D."/>
            <person name="Alland D."/>
            <person name="Eisen J.A."/>
            <person name="Carpenter L."/>
            <person name="White O."/>
            <person name="Peterson J.D."/>
            <person name="DeBoy R.T."/>
            <person name="Dodson R.J."/>
            <person name="Gwinn M.L."/>
            <person name="Haft D.H."/>
            <person name="Hickey E.K."/>
            <person name="Kolonay J.F."/>
            <person name="Nelson W.C."/>
            <person name="Umayam L.A."/>
            <person name="Ermolaeva M.D."/>
            <person name="Salzberg S.L."/>
            <person name="Delcher A."/>
            <person name="Utterback T.R."/>
            <person name="Weidman J.F."/>
            <person name="Khouri H.M."/>
            <person name="Gill J."/>
            <person name="Mikula A."/>
            <person name="Bishai W."/>
            <person name="Jacobs W.R. Jr."/>
            <person name="Venter J.C."/>
            <person name="Fraser C.M."/>
        </authorList>
    </citation>
    <scope>NUCLEOTIDE SEQUENCE [LARGE SCALE GENOMIC DNA]</scope>
    <source>
        <strain>CDC 1551 / Oshkosh</strain>
    </source>
</reference>
<gene>
    <name type="ordered locus">MT1330</name>
</gene>
<proteinExistence type="predicted"/>